<dbReference type="EMBL" id="AE013218">
    <property type="protein sequence ID" value="AAM68038.1"/>
    <property type="molecule type" value="Genomic_DNA"/>
</dbReference>
<dbReference type="RefSeq" id="WP_011054004.1">
    <property type="nucleotide sequence ID" value="NC_004061.1"/>
</dbReference>
<dbReference type="SMR" id="Q8K960"/>
<dbReference type="STRING" id="198804.BUsg_495"/>
<dbReference type="GeneID" id="93003970"/>
<dbReference type="KEGG" id="bas:BUsg_495"/>
<dbReference type="eggNOG" id="COG0093">
    <property type="taxonomic scope" value="Bacteria"/>
</dbReference>
<dbReference type="HOGENOM" id="CLU_095071_2_1_6"/>
<dbReference type="Proteomes" id="UP000000416">
    <property type="component" value="Chromosome"/>
</dbReference>
<dbReference type="GO" id="GO:0022625">
    <property type="term" value="C:cytosolic large ribosomal subunit"/>
    <property type="evidence" value="ECO:0007669"/>
    <property type="project" value="TreeGrafter"/>
</dbReference>
<dbReference type="GO" id="GO:0070180">
    <property type="term" value="F:large ribosomal subunit rRNA binding"/>
    <property type="evidence" value="ECO:0007669"/>
    <property type="project" value="TreeGrafter"/>
</dbReference>
<dbReference type="GO" id="GO:0003735">
    <property type="term" value="F:structural constituent of ribosome"/>
    <property type="evidence" value="ECO:0007669"/>
    <property type="project" value="InterPro"/>
</dbReference>
<dbReference type="GO" id="GO:0006412">
    <property type="term" value="P:translation"/>
    <property type="evidence" value="ECO:0007669"/>
    <property type="project" value="UniProtKB-UniRule"/>
</dbReference>
<dbReference type="CDD" id="cd00337">
    <property type="entry name" value="Ribosomal_uL14"/>
    <property type="match status" value="1"/>
</dbReference>
<dbReference type="FunFam" id="2.40.150.20:FF:000001">
    <property type="entry name" value="50S ribosomal protein L14"/>
    <property type="match status" value="1"/>
</dbReference>
<dbReference type="Gene3D" id="2.40.150.20">
    <property type="entry name" value="Ribosomal protein L14"/>
    <property type="match status" value="1"/>
</dbReference>
<dbReference type="HAMAP" id="MF_01367">
    <property type="entry name" value="Ribosomal_uL14"/>
    <property type="match status" value="1"/>
</dbReference>
<dbReference type="InterPro" id="IPR000218">
    <property type="entry name" value="Ribosomal_uL14"/>
</dbReference>
<dbReference type="InterPro" id="IPR005745">
    <property type="entry name" value="Ribosomal_uL14_bac-type"/>
</dbReference>
<dbReference type="InterPro" id="IPR019972">
    <property type="entry name" value="Ribosomal_uL14_CS"/>
</dbReference>
<dbReference type="InterPro" id="IPR036853">
    <property type="entry name" value="Ribosomal_uL14_sf"/>
</dbReference>
<dbReference type="NCBIfam" id="TIGR01067">
    <property type="entry name" value="rplN_bact"/>
    <property type="match status" value="1"/>
</dbReference>
<dbReference type="PANTHER" id="PTHR11761">
    <property type="entry name" value="50S/60S RIBOSOMAL PROTEIN L14/L23"/>
    <property type="match status" value="1"/>
</dbReference>
<dbReference type="PANTHER" id="PTHR11761:SF3">
    <property type="entry name" value="LARGE RIBOSOMAL SUBUNIT PROTEIN UL14M"/>
    <property type="match status" value="1"/>
</dbReference>
<dbReference type="Pfam" id="PF00238">
    <property type="entry name" value="Ribosomal_L14"/>
    <property type="match status" value="1"/>
</dbReference>
<dbReference type="SMART" id="SM01374">
    <property type="entry name" value="Ribosomal_L14"/>
    <property type="match status" value="1"/>
</dbReference>
<dbReference type="SUPFAM" id="SSF50193">
    <property type="entry name" value="Ribosomal protein L14"/>
    <property type="match status" value="1"/>
</dbReference>
<dbReference type="PROSITE" id="PS00049">
    <property type="entry name" value="RIBOSOMAL_L14"/>
    <property type="match status" value="1"/>
</dbReference>
<feature type="chain" id="PRO_0000128534" description="Large ribosomal subunit protein uL14">
    <location>
        <begin position="1"/>
        <end position="122"/>
    </location>
</feature>
<organism>
    <name type="scientific">Buchnera aphidicola subsp. Schizaphis graminum (strain Sg)</name>
    <dbReference type="NCBI Taxonomy" id="198804"/>
    <lineage>
        <taxon>Bacteria</taxon>
        <taxon>Pseudomonadati</taxon>
        <taxon>Pseudomonadota</taxon>
        <taxon>Gammaproteobacteria</taxon>
        <taxon>Enterobacterales</taxon>
        <taxon>Erwiniaceae</taxon>
        <taxon>Buchnera</taxon>
    </lineage>
</organism>
<comment type="function">
    <text evidence="1">Binds to 23S rRNA. Forms part of two intersubunit bridges in the 70S ribosome.</text>
</comment>
<comment type="subunit">
    <text evidence="1">Part of the 50S ribosomal subunit. Forms a cluster with proteins L3 and L19. In the 70S ribosome, L14 and L19 interact and together make contacts with the 16S rRNA in bridges B5 and B8.</text>
</comment>
<comment type="similarity">
    <text evidence="1">Belongs to the universal ribosomal protein uL14 family.</text>
</comment>
<accession>Q8K960</accession>
<sequence length="122" mass="13544">MIQEQTILNVADNSGARSAMCIKVLGGSRRRYARIGDIIKITIKEAIPRGKVKKGEVLKAVVVRTKKGVRRSDGSIIRFDNNACVVLNNNEQPVGTRIFGPVTRELRIEKFMKIISLAPEVL</sequence>
<gene>
    <name evidence="1" type="primary">rplN</name>
    <name type="ordered locus">BUsg_495</name>
</gene>
<reference key="1">
    <citation type="journal article" date="2002" name="Science">
        <title>50 million years of genomic stasis in endosymbiotic bacteria.</title>
        <authorList>
            <person name="Tamas I."/>
            <person name="Klasson L."/>
            <person name="Canbaeck B."/>
            <person name="Naeslund A.K."/>
            <person name="Eriksson A.-S."/>
            <person name="Wernegreen J.J."/>
            <person name="Sandstroem J.P."/>
            <person name="Moran N.A."/>
            <person name="Andersson S.G.E."/>
        </authorList>
    </citation>
    <scope>NUCLEOTIDE SEQUENCE [LARGE SCALE GENOMIC DNA]</scope>
    <source>
        <strain>Sg</strain>
    </source>
</reference>
<proteinExistence type="inferred from homology"/>
<protein>
    <recommendedName>
        <fullName evidence="1">Large ribosomal subunit protein uL14</fullName>
    </recommendedName>
    <alternativeName>
        <fullName evidence="2">50S ribosomal protein L14</fullName>
    </alternativeName>
</protein>
<name>RL14_BUCAP</name>
<keyword id="KW-0687">Ribonucleoprotein</keyword>
<keyword id="KW-0689">Ribosomal protein</keyword>
<keyword id="KW-0694">RNA-binding</keyword>
<keyword id="KW-0699">rRNA-binding</keyword>
<evidence type="ECO:0000255" key="1">
    <source>
        <dbReference type="HAMAP-Rule" id="MF_01367"/>
    </source>
</evidence>
<evidence type="ECO:0000305" key="2"/>